<name>KIF11_HUMAN</name>
<reference key="1">
    <citation type="journal article" date="1995" name="Cell">
        <title>Phosphorylation by p34cdc2 regulates spindle association of human Eg5, a kinesin-related motor essential for bipolar spindle formation in vivo.</title>
        <authorList>
            <person name="Blangy A."/>
            <person name="Lane H.A."/>
            <person name="D'Herin P."/>
            <person name="Harper M."/>
            <person name="Kress M."/>
            <person name="Nigg E.A."/>
        </authorList>
    </citation>
    <scope>NUCLEOTIDE SEQUENCE [MRNA]</scope>
    <scope>PHOSPHORYLATION AT THR-926</scope>
    <scope>MUTAGENESIS</scope>
</reference>
<reference key="2">
    <citation type="journal article" date="1998" name="J. Cell Sci.">
        <title>Expanding the role of HsEg5 within the mitotic and post-mitotic phases of the cell cycle.</title>
        <authorList>
            <person name="Whitehead C.M."/>
            <person name="Rattner J.B."/>
        </authorList>
    </citation>
    <scope>NUCLEOTIDE SEQUENCE [MRNA]</scope>
</reference>
<reference key="3">
    <citation type="journal article" date="2004" name="Nature">
        <title>The DNA sequence and comparative analysis of human chromosome 10.</title>
        <authorList>
            <person name="Deloukas P."/>
            <person name="Earthrowl M.E."/>
            <person name="Grafham D.V."/>
            <person name="Rubenfield M."/>
            <person name="French L."/>
            <person name="Steward C.A."/>
            <person name="Sims S.K."/>
            <person name="Jones M.C."/>
            <person name="Searle S."/>
            <person name="Scott C."/>
            <person name="Howe K."/>
            <person name="Hunt S.E."/>
            <person name="Andrews T.D."/>
            <person name="Gilbert J.G.R."/>
            <person name="Swarbreck D."/>
            <person name="Ashurst J.L."/>
            <person name="Taylor A."/>
            <person name="Battles J."/>
            <person name="Bird C.P."/>
            <person name="Ainscough R."/>
            <person name="Almeida J.P."/>
            <person name="Ashwell R.I.S."/>
            <person name="Ambrose K.D."/>
            <person name="Babbage A.K."/>
            <person name="Bagguley C.L."/>
            <person name="Bailey J."/>
            <person name="Banerjee R."/>
            <person name="Bates K."/>
            <person name="Beasley H."/>
            <person name="Bray-Allen S."/>
            <person name="Brown A.J."/>
            <person name="Brown J.Y."/>
            <person name="Burford D.C."/>
            <person name="Burrill W."/>
            <person name="Burton J."/>
            <person name="Cahill P."/>
            <person name="Camire D."/>
            <person name="Carter N.P."/>
            <person name="Chapman J.C."/>
            <person name="Clark S.Y."/>
            <person name="Clarke G."/>
            <person name="Clee C.M."/>
            <person name="Clegg S."/>
            <person name="Corby N."/>
            <person name="Coulson A."/>
            <person name="Dhami P."/>
            <person name="Dutta I."/>
            <person name="Dunn M."/>
            <person name="Faulkner L."/>
            <person name="Frankish A."/>
            <person name="Frankland J.A."/>
            <person name="Garner P."/>
            <person name="Garnett J."/>
            <person name="Gribble S."/>
            <person name="Griffiths C."/>
            <person name="Grocock R."/>
            <person name="Gustafson E."/>
            <person name="Hammond S."/>
            <person name="Harley J.L."/>
            <person name="Hart E."/>
            <person name="Heath P.D."/>
            <person name="Ho T.P."/>
            <person name="Hopkins B."/>
            <person name="Horne J."/>
            <person name="Howden P.J."/>
            <person name="Huckle E."/>
            <person name="Hynds C."/>
            <person name="Johnson C."/>
            <person name="Johnson D."/>
            <person name="Kana A."/>
            <person name="Kay M."/>
            <person name="Kimberley A.M."/>
            <person name="Kershaw J.K."/>
            <person name="Kokkinaki M."/>
            <person name="Laird G.K."/>
            <person name="Lawlor S."/>
            <person name="Lee H.M."/>
            <person name="Leongamornlert D.A."/>
            <person name="Laird G."/>
            <person name="Lloyd C."/>
            <person name="Lloyd D.M."/>
            <person name="Loveland J."/>
            <person name="Lovell J."/>
            <person name="McLaren S."/>
            <person name="McLay K.E."/>
            <person name="McMurray A."/>
            <person name="Mashreghi-Mohammadi M."/>
            <person name="Matthews L."/>
            <person name="Milne S."/>
            <person name="Nickerson T."/>
            <person name="Nguyen M."/>
            <person name="Overton-Larty E."/>
            <person name="Palmer S.A."/>
            <person name="Pearce A.V."/>
            <person name="Peck A.I."/>
            <person name="Pelan S."/>
            <person name="Phillimore B."/>
            <person name="Porter K."/>
            <person name="Rice C.M."/>
            <person name="Rogosin A."/>
            <person name="Ross M.T."/>
            <person name="Sarafidou T."/>
            <person name="Sehra H.K."/>
            <person name="Shownkeen R."/>
            <person name="Skuce C.D."/>
            <person name="Smith M."/>
            <person name="Standring L."/>
            <person name="Sycamore N."/>
            <person name="Tester J."/>
            <person name="Thorpe A."/>
            <person name="Torcasso W."/>
            <person name="Tracey A."/>
            <person name="Tromans A."/>
            <person name="Tsolas J."/>
            <person name="Wall M."/>
            <person name="Walsh J."/>
            <person name="Wang H."/>
            <person name="Weinstock K."/>
            <person name="West A.P."/>
            <person name="Willey D.L."/>
            <person name="Whitehead S.L."/>
            <person name="Wilming L."/>
            <person name="Wray P.W."/>
            <person name="Young L."/>
            <person name="Chen Y."/>
            <person name="Lovering R.C."/>
            <person name="Moschonas N.K."/>
            <person name="Siebert R."/>
            <person name="Fechtel K."/>
            <person name="Bentley D."/>
            <person name="Durbin R.M."/>
            <person name="Hubbard T."/>
            <person name="Doucette-Stamm L."/>
            <person name="Beck S."/>
            <person name="Smith D.R."/>
            <person name="Rogers J."/>
        </authorList>
    </citation>
    <scope>NUCLEOTIDE SEQUENCE [LARGE SCALE GENOMIC DNA]</scope>
</reference>
<reference key="4">
    <citation type="journal article" date="2004" name="Genome Res.">
        <title>The status, quality, and expansion of the NIH full-length cDNA project: the Mammalian Gene Collection (MGC).</title>
        <authorList>
            <consortium name="The MGC Project Team"/>
        </authorList>
    </citation>
    <scope>NUCLEOTIDE SEQUENCE [LARGE SCALE MRNA]</scope>
    <source>
        <tissue>Lung</tissue>
    </source>
</reference>
<reference key="5">
    <citation type="journal article" date="1995" name="Mol. Endocrinol.">
        <title>Two classes of proteins dependent on either the presence or absence of thyroid hormone for interaction with the thyroid hormone receptor.</title>
        <authorList>
            <person name="Lee J.W."/>
            <person name="Choi H.-S."/>
            <person name="Gyuris J."/>
            <person name="Brent R."/>
            <person name="Moore D.D."/>
        </authorList>
    </citation>
    <scope>NUCLEOTIDE SEQUENCE [MRNA] OF 818-867</scope>
</reference>
<reference key="6">
    <citation type="journal article" date="2006" name="Nat. Biotechnol.">
        <title>A probability-based approach for high-throughput protein phosphorylation analysis and site localization.</title>
        <authorList>
            <person name="Beausoleil S.A."/>
            <person name="Villen J."/>
            <person name="Gerber S.A."/>
            <person name="Rush J."/>
            <person name="Gygi S.P."/>
        </authorList>
    </citation>
    <scope>IDENTIFICATION BY MASS SPECTROMETRY [LARGE SCALE ANALYSIS]</scope>
    <source>
        <tissue>Cervix carcinoma</tissue>
    </source>
</reference>
<reference key="7">
    <citation type="journal article" date="2007" name="Science">
        <title>ATM and ATR substrate analysis reveals extensive protein networks responsive to DNA damage.</title>
        <authorList>
            <person name="Matsuoka S."/>
            <person name="Ballif B.A."/>
            <person name="Smogorzewska A."/>
            <person name="McDonald E.R. III"/>
            <person name="Hurov K.E."/>
            <person name="Luo J."/>
            <person name="Bakalarski C.E."/>
            <person name="Zhao Z."/>
            <person name="Solimini N."/>
            <person name="Lerenthal Y."/>
            <person name="Shiloh Y."/>
            <person name="Gygi S.P."/>
            <person name="Elledge S.J."/>
        </authorList>
    </citation>
    <scope>PHOSPHORYLATION [LARGE SCALE ANALYSIS] AT THR-458</scope>
    <scope>IDENTIFICATION BY MASS SPECTROMETRY [LARGE SCALE ANALYSIS]</scope>
    <source>
        <tissue>Embryonic kidney</tissue>
    </source>
</reference>
<reference key="8">
    <citation type="journal article" date="2008" name="J. Cell Sci.">
        <title>The NIMA-family kinase Nek6 phosphorylates the kinesin Eg5 at a novel site necessary for mitotic spindle formation.</title>
        <authorList>
            <person name="Rapley J."/>
            <person name="Nicolas M."/>
            <person name="Groen A."/>
            <person name="Regue L."/>
            <person name="Bertran M.T."/>
            <person name="Caelles C."/>
            <person name="Avruch J."/>
            <person name="Roig J."/>
        </authorList>
    </citation>
    <scope>FUNCTION</scope>
    <scope>INTERACTION WITH NEK6</scope>
    <scope>SUBCELLULAR LOCATION</scope>
    <scope>PHOSPHORYLATION AT THR-926 AND SER-1033</scope>
    <scope>MUTAGENESIS OF THR-926 AND SER-1033</scope>
</reference>
<reference key="9">
    <citation type="journal article" date="2008" name="Proc. Natl. Acad. Sci. U.S.A.">
        <title>A quantitative atlas of mitotic phosphorylation.</title>
        <authorList>
            <person name="Dephoure N."/>
            <person name="Zhou C."/>
            <person name="Villen J."/>
            <person name="Beausoleil S.A."/>
            <person name="Bakalarski C.E."/>
            <person name="Elledge S.J."/>
            <person name="Gygi S.P."/>
        </authorList>
    </citation>
    <scope>IDENTIFICATION BY MASS SPECTROMETRY [LARGE SCALE ANALYSIS]</scope>
    <source>
        <tissue>Cervix carcinoma</tissue>
    </source>
</reference>
<reference key="10">
    <citation type="journal article" date="2009" name="Science">
        <title>Lysine acetylation targets protein complexes and co-regulates major cellular functions.</title>
        <authorList>
            <person name="Choudhary C."/>
            <person name="Kumar C."/>
            <person name="Gnad F."/>
            <person name="Nielsen M.L."/>
            <person name="Rehman M."/>
            <person name="Walther T.C."/>
            <person name="Olsen J.V."/>
            <person name="Mann M."/>
        </authorList>
    </citation>
    <scope>ACETYLATION [LARGE SCALE ANALYSIS] AT LYS-146</scope>
    <scope>IDENTIFICATION BY MASS SPECTROMETRY [LARGE SCALE ANALYSIS]</scope>
</reference>
<reference key="11">
    <citation type="journal article" date="2010" name="Sci. Signal.">
        <title>Quantitative phosphoproteomics reveals widespread full phosphorylation site occupancy during mitosis.</title>
        <authorList>
            <person name="Olsen J.V."/>
            <person name="Vermeulen M."/>
            <person name="Santamaria A."/>
            <person name="Kumar C."/>
            <person name="Miller M.L."/>
            <person name="Jensen L.J."/>
            <person name="Gnad F."/>
            <person name="Cox J."/>
            <person name="Jensen T.S."/>
            <person name="Nigg E.A."/>
            <person name="Brunak S."/>
            <person name="Mann M."/>
        </authorList>
    </citation>
    <scope>PHOSPHORYLATION [LARGE SCALE ANALYSIS] AT THR-926</scope>
    <scope>IDENTIFICATION BY MASS SPECTROMETRY [LARGE SCALE ANALYSIS]</scope>
    <source>
        <tissue>Cervix carcinoma</tissue>
    </source>
</reference>
<reference key="12">
    <citation type="journal article" date="2011" name="BMC Syst. Biol.">
        <title>Initial characterization of the human central proteome.</title>
        <authorList>
            <person name="Burkard T.R."/>
            <person name="Planyavsky M."/>
            <person name="Kaupe I."/>
            <person name="Breitwieser F.P."/>
            <person name="Buerckstuemmer T."/>
            <person name="Bennett K.L."/>
            <person name="Superti-Furga G."/>
            <person name="Colinge J."/>
        </authorList>
    </citation>
    <scope>IDENTIFICATION BY MASS SPECTROMETRY [LARGE SCALE ANALYSIS]</scope>
</reference>
<reference key="13">
    <citation type="journal article" date="2011" name="Cancer Res.">
        <title>Tumor suppressor RARRES1 interacts with cytoplasmic carboxypeptidase AGBL2 to regulate the alpha-tubulin tyrosination cycle.</title>
        <authorList>
            <person name="Sahab Z.J."/>
            <person name="Hall M.D."/>
            <person name="Me Sung Y."/>
            <person name="Dakshanamurthy S."/>
            <person name="Ji Y."/>
            <person name="Kumar D."/>
            <person name="Byers S.W."/>
        </authorList>
    </citation>
    <scope>INTERACTION WITH RARRES1 AND AGBL2</scope>
</reference>
<reference key="14">
    <citation type="journal article" date="2011" name="Sci. Signal.">
        <title>System-wide temporal characterization of the proteome and phosphoproteome of human embryonic stem cell differentiation.</title>
        <authorList>
            <person name="Rigbolt K.T."/>
            <person name="Prokhorova T.A."/>
            <person name="Akimov V."/>
            <person name="Henningsen J."/>
            <person name="Johansen P.T."/>
            <person name="Kratchmarova I."/>
            <person name="Kassem M."/>
            <person name="Mann M."/>
            <person name="Olsen J.V."/>
            <person name="Blagoev B."/>
        </authorList>
    </citation>
    <scope>IDENTIFICATION BY MASS SPECTROMETRY [LARGE SCALE ANALYSIS]</scope>
</reference>
<reference key="15">
    <citation type="journal article" date="2013" name="J. Cell Biol.">
        <title>Kinesin-5/Eg5 is important for transport of CARTS from the trans-Golgi network to the cell surface.</title>
        <authorList>
            <person name="Wakana Y."/>
            <person name="Villeneuve J."/>
            <person name="van Galen J."/>
            <person name="Cruz-Garcia D."/>
            <person name="Tagaya M."/>
            <person name="Malhotra V."/>
        </authorList>
    </citation>
    <scope>FUNCTION</scope>
    <scope>SUBCELLULAR LOCATION</scope>
</reference>
<reference key="16">
    <citation type="journal article" date="2013" name="J. Proteome Res.">
        <title>Toward a comprehensive characterization of a human cancer cell phosphoproteome.</title>
        <authorList>
            <person name="Zhou H."/>
            <person name="Di Palma S."/>
            <person name="Preisinger C."/>
            <person name="Peng M."/>
            <person name="Polat A.N."/>
            <person name="Heck A.J."/>
            <person name="Mohammed S."/>
        </authorList>
    </citation>
    <scope>PHOSPHORYLATION [LARGE SCALE ANALYSIS] AT THR-458; THR-925; THR-926 AND SER-1033</scope>
    <scope>IDENTIFICATION BY MASS SPECTROMETRY [LARGE SCALE ANALYSIS]</scope>
    <source>
        <tissue>Cervix carcinoma</tissue>
        <tissue>Erythroleukemia</tissue>
    </source>
</reference>
<reference key="17">
    <citation type="journal article" date="2017" name="Nat. Struct. Mol. Biol.">
        <title>Site-specific mapping of the human SUMO proteome reveals co-modification with phosphorylation.</title>
        <authorList>
            <person name="Hendriks I.A."/>
            <person name="Lyon D."/>
            <person name="Young C."/>
            <person name="Jensen L.J."/>
            <person name="Vertegaal A.C."/>
            <person name="Nielsen M.L."/>
        </authorList>
    </citation>
    <scope>SUMOYLATION [LARGE SCALE ANALYSIS] AT LYS-477</scope>
    <scope>IDENTIFICATION BY MASS SPECTROMETRY [LARGE SCALE ANALYSIS]</scope>
</reference>
<reference key="18">
    <citation type="journal article" date="2023" name="J. Cell Biol.">
        <title>UHRF1 promotes spindle assembly and chromosome congression by catalyzing EG5 polyubiquitination.</title>
        <authorList>
            <person name="Qi X."/>
            <person name="Liu Y."/>
            <person name="Peng Y."/>
            <person name="Fu Y."/>
            <person name="Fu Y."/>
            <person name="Yin L."/>
            <person name="Li X."/>
        </authorList>
    </citation>
    <scope>FUNCTION</scope>
    <scope>INTERACTION WITH TPX2</scope>
    <scope>SUBCELLULAR LOCATION</scope>
    <scope>MUTAGENESIS OF LYS-1034</scope>
    <scope>UBIQUITINATION AT LYS-1034</scope>
</reference>
<reference key="19">
    <citation type="journal article" date="2001" name="J. Biol. Chem.">
        <title>Crystal structure of the mitotic spindle kinesin Eg5 reveals a novel conformation of the neck-linker.</title>
        <authorList>
            <person name="Turner J."/>
            <person name="Anderson R."/>
            <person name="Guo J."/>
            <person name="Beraud C."/>
            <person name="Fletterick R."/>
            <person name="Sakowicz R."/>
        </authorList>
    </citation>
    <scope>X-RAY CRYSTALLOGRAPHY (2.1 ANGSTROMS) OF 1-368</scope>
</reference>
<reference key="20">
    <citation type="journal article" date="2007" name="Mol. Cell">
        <title>A histone H2A deubiquitinase complex coordinating histone acetylation and H1 dissociation in transcriptional regulation.</title>
        <authorList>
            <person name="Zhu P."/>
            <person name="Zhou W."/>
            <person name="Wang J."/>
            <person name="Puc J."/>
            <person name="Ohgi K.A."/>
            <person name="Erdjument-Bromage H."/>
            <person name="Tempst P."/>
            <person name="Glass C.K."/>
            <person name="Rosenfeld M.G."/>
        </authorList>
    </citation>
    <scope>IDENTIFICATION IN A LARGE CHROMATIN REMODELING COMPLEX</scope>
</reference>
<reference key="21">
    <citation type="journal article" date="2012" name="Am. J. Hum. Genet.">
        <title>Mutations in KIF11 cause autosomal-dominant microcephaly variably associated with congenital lymphedema and chorioretinopathy.</title>
        <authorList>
            <person name="Ostergaard P."/>
            <person name="Simpson M.A."/>
            <person name="Mendola A."/>
            <person name="Vasudevan P."/>
            <person name="Connell F.C."/>
            <person name="van Impel A."/>
            <person name="Moore A.T."/>
            <person name="Loeys B.L."/>
            <person name="Ghalamkarpour A."/>
            <person name="Onoufriadis A."/>
            <person name="Martinez-Corral I."/>
            <person name="Devery S."/>
            <person name="Leroy J.G."/>
            <person name="van Laer L."/>
            <person name="Singer A."/>
            <person name="Bialer M.G."/>
            <person name="McEntagart M."/>
            <person name="Quarrell O."/>
            <person name="Brice G."/>
            <person name="Trembath R.C."/>
            <person name="Schulte-Merker S."/>
            <person name="Makinen T."/>
            <person name="Vikkula M."/>
            <person name="Mortimer P.S."/>
            <person name="Mansour S."/>
            <person name="Jeffery S."/>
        </authorList>
    </citation>
    <scope>VARIANTS MCLMR LEU-144; CYS-234; CYS-235 AND CYS-944</scope>
</reference>
<proteinExistence type="evidence at protein level"/>
<organism>
    <name type="scientific">Homo sapiens</name>
    <name type="common">Human</name>
    <dbReference type="NCBI Taxonomy" id="9606"/>
    <lineage>
        <taxon>Eukaryota</taxon>
        <taxon>Metazoa</taxon>
        <taxon>Chordata</taxon>
        <taxon>Craniata</taxon>
        <taxon>Vertebrata</taxon>
        <taxon>Euteleostomi</taxon>
        <taxon>Mammalia</taxon>
        <taxon>Eutheria</taxon>
        <taxon>Euarchontoglires</taxon>
        <taxon>Primates</taxon>
        <taxon>Haplorrhini</taxon>
        <taxon>Catarrhini</taxon>
        <taxon>Hominidae</taxon>
        <taxon>Homo</taxon>
    </lineage>
</organism>
<gene>
    <name type="primary">KIF11</name>
    <name type="synonym">EG5</name>
    <name type="synonym">KNSL1</name>
    <name type="synonym">TRIP5</name>
</gene>
<feature type="chain" id="PRO_0000125372" description="Kinesin-like protein KIF11">
    <location>
        <begin position="1"/>
        <end position="1056"/>
    </location>
</feature>
<feature type="domain" description="Kinesin motor" evidence="2">
    <location>
        <begin position="18"/>
        <end position="359"/>
    </location>
</feature>
<feature type="coiled-coil region" evidence="1">
    <location>
        <begin position="364"/>
        <end position="480"/>
    </location>
</feature>
<feature type="coiled-coil region" evidence="1">
    <location>
        <begin position="736"/>
        <end position="763"/>
    </location>
</feature>
<feature type="binding site" evidence="2">
    <location>
        <begin position="105"/>
        <end position="112"/>
    </location>
    <ligand>
        <name>ATP</name>
        <dbReference type="ChEBI" id="CHEBI:30616"/>
    </ligand>
</feature>
<feature type="modified residue" description="N6-acetyllysine" evidence="12">
    <location>
        <position position="146"/>
    </location>
</feature>
<feature type="modified residue" description="Phosphothreonine" evidence="11 14">
    <location>
        <position position="458"/>
    </location>
</feature>
<feature type="modified residue" description="Phosphothreonine" evidence="14">
    <location>
        <position position="925"/>
    </location>
</feature>
<feature type="modified residue" description="Phosphothreonine; by CDK1" evidence="4 9 13 14">
    <location>
        <position position="926"/>
    </location>
</feature>
<feature type="modified residue" description="Phosphoserine; by NEK6" evidence="4 14">
    <location>
        <position position="1033"/>
    </location>
</feature>
<feature type="cross-link" description="Glycyl lysine isopeptide (Lys-Gly) (interchain with G-Cter in SUMO2)" evidence="15">
    <location>
        <position position="477"/>
    </location>
</feature>
<feature type="cross-link" description="Glycyl lysine isopeptide (Lys-Gly) (interchain with G-Cter in ubiquitin)" evidence="8">
    <location>
        <position position="1034"/>
    </location>
</feature>
<feature type="sequence variant" id="VAR_067829" description="In MCLMR." evidence="6">
    <original>F</original>
    <variation>L</variation>
    <location>
        <position position="144"/>
    </location>
</feature>
<feature type="sequence variant" id="VAR_067830" description="In MCLMR." evidence="6">
    <original>R</original>
    <variation>C</variation>
    <location>
        <position position="234"/>
    </location>
</feature>
<feature type="sequence variant" id="VAR_067831" description="In MCLMR; dbSNP:rs387906643." evidence="6">
    <original>S</original>
    <variation>C</variation>
    <location>
        <position position="235"/>
    </location>
</feature>
<feature type="sequence variant" id="VAR_067832" description="In MCLMR; dbSNP:rs387906642." evidence="6">
    <original>R</original>
    <variation>C</variation>
    <location>
        <position position="944"/>
    </location>
</feature>
<feature type="sequence variant" id="VAR_049682" description="In dbSNP:rs34417963.">
    <original>L</original>
    <variation>F</variation>
    <location>
        <position position="1042"/>
    </location>
</feature>
<feature type="mutagenesis site" description="No mitotic phosphorylation. No binding to spindle apparatus." evidence="4">
    <original>T</original>
    <variation>A</variation>
    <location>
        <position position="926"/>
    </location>
</feature>
<feature type="mutagenesis site" description="Still binds to the mitotic spindle but mitotic progression is impaired." evidence="4">
    <original>S</original>
    <variation>A</variation>
    <location>
        <position position="1033"/>
    </location>
</feature>
<feature type="mutagenesis site" description="Still binds to the mitotic spindle but mitotic progression is impaired." evidence="4">
    <original>S</original>
    <variation>D</variation>
    <location>
        <position position="1033"/>
    </location>
</feature>
<feature type="mutagenesis site" description="Significantly diminished interaction with TPX2." evidence="8">
    <original>K</original>
    <variation>R</variation>
    <location>
        <position position="1034"/>
    </location>
</feature>
<feature type="sequence conflict" description="In Ref. 1; CAA59449." evidence="10" ref="1">
    <original>EL</original>
    <variation>RNS</variation>
    <location>
        <begin position="674"/>
        <end position="675"/>
    </location>
</feature>
<feature type="strand" evidence="22">
    <location>
        <begin position="19"/>
        <end position="25"/>
    </location>
</feature>
<feature type="helix" evidence="22">
    <location>
        <begin position="30"/>
        <end position="34"/>
    </location>
</feature>
<feature type="strand" evidence="26">
    <location>
        <begin position="36"/>
        <end position="38"/>
    </location>
</feature>
<feature type="strand" evidence="22">
    <location>
        <begin position="41"/>
        <end position="44"/>
    </location>
</feature>
<feature type="turn" evidence="22">
    <location>
        <begin position="45"/>
        <end position="48"/>
    </location>
</feature>
<feature type="strand" evidence="22">
    <location>
        <begin position="49"/>
        <end position="53"/>
    </location>
</feature>
<feature type="turn" evidence="27">
    <location>
        <begin position="56"/>
        <end position="58"/>
    </location>
</feature>
<feature type="strand" evidence="22">
    <location>
        <begin position="63"/>
        <end position="67"/>
    </location>
</feature>
<feature type="strand" evidence="22">
    <location>
        <begin position="69"/>
        <end position="72"/>
    </location>
</feature>
<feature type="helix" evidence="22">
    <location>
        <begin position="78"/>
        <end position="94"/>
    </location>
</feature>
<feature type="strand" evidence="22">
    <location>
        <begin position="98"/>
        <end position="106"/>
    </location>
</feature>
<feature type="helix" evidence="22">
    <location>
        <begin position="111"/>
        <end position="115"/>
    </location>
</feature>
<feature type="helix" evidence="22">
    <location>
        <begin position="121"/>
        <end position="123"/>
    </location>
</feature>
<feature type="turn" evidence="22">
    <location>
        <begin position="127"/>
        <end position="129"/>
    </location>
</feature>
<feature type="strand" evidence="24">
    <location>
        <begin position="131"/>
        <end position="133"/>
    </location>
</feature>
<feature type="helix" evidence="22">
    <location>
        <begin position="135"/>
        <end position="148"/>
    </location>
</feature>
<feature type="turn" evidence="19">
    <location>
        <begin position="149"/>
        <end position="151"/>
    </location>
</feature>
<feature type="strand" evidence="22">
    <location>
        <begin position="153"/>
        <end position="164"/>
    </location>
</feature>
<feature type="strand" evidence="22">
    <location>
        <begin position="167"/>
        <end position="171"/>
    </location>
</feature>
<feature type="strand" evidence="21">
    <location>
        <begin position="174"/>
        <end position="176"/>
    </location>
</feature>
<feature type="strand" evidence="22">
    <location>
        <begin position="183"/>
        <end position="186"/>
    </location>
</feature>
<feature type="strand" evidence="17">
    <location>
        <begin position="188"/>
        <end position="190"/>
    </location>
</feature>
<feature type="strand" evidence="22">
    <location>
        <begin position="194"/>
        <end position="197"/>
    </location>
</feature>
<feature type="strand" evidence="27">
    <location>
        <begin position="202"/>
        <end position="204"/>
    </location>
</feature>
<feature type="helix" evidence="22">
    <location>
        <begin position="207"/>
        <end position="223"/>
    </location>
</feature>
<feature type="helix" evidence="22">
    <location>
        <begin position="226"/>
        <end position="233"/>
    </location>
</feature>
<feature type="strand" evidence="22">
    <location>
        <begin position="235"/>
        <end position="248"/>
    </location>
</feature>
<feature type="strand" evidence="18">
    <location>
        <begin position="250"/>
        <end position="252"/>
    </location>
</feature>
<feature type="strand" evidence="22">
    <location>
        <begin position="254"/>
        <end position="265"/>
    </location>
</feature>
<feature type="helix" evidence="16">
    <location>
        <begin position="269"/>
        <end position="271"/>
    </location>
</feature>
<feature type="helix" evidence="20">
    <location>
        <begin position="272"/>
        <end position="275"/>
    </location>
</feature>
<feature type="strand" evidence="23">
    <location>
        <begin position="278"/>
        <end position="280"/>
    </location>
</feature>
<feature type="helix" evidence="28">
    <location>
        <begin position="282"/>
        <end position="288"/>
    </location>
</feature>
<feature type="helix" evidence="22">
    <location>
        <begin position="290"/>
        <end position="304"/>
    </location>
</feature>
<feature type="helix" evidence="22">
    <location>
        <begin position="311"/>
        <end position="313"/>
    </location>
</feature>
<feature type="helix" evidence="22">
    <location>
        <begin position="315"/>
        <end position="320"/>
    </location>
</feature>
<feature type="helix" evidence="22">
    <location>
        <begin position="321"/>
        <end position="323"/>
    </location>
</feature>
<feature type="strand" evidence="22">
    <location>
        <begin position="324"/>
        <end position="327"/>
    </location>
</feature>
<feature type="strand" evidence="22">
    <location>
        <begin position="330"/>
        <end position="336"/>
    </location>
</feature>
<feature type="helix" evidence="22">
    <location>
        <begin position="340"/>
        <end position="342"/>
    </location>
</feature>
<feature type="helix" evidence="22">
    <location>
        <begin position="343"/>
        <end position="357"/>
    </location>
</feature>
<feature type="helix" evidence="25">
    <location>
        <begin position="372"/>
        <end position="391"/>
    </location>
</feature>
<evidence type="ECO:0000255" key="1"/>
<evidence type="ECO:0000255" key="2">
    <source>
        <dbReference type="PROSITE-ProRule" id="PRU00283"/>
    </source>
</evidence>
<evidence type="ECO:0000269" key="3">
    <source>
    </source>
</evidence>
<evidence type="ECO:0000269" key="4">
    <source>
    </source>
</evidence>
<evidence type="ECO:0000269" key="5">
    <source>
    </source>
</evidence>
<evidence type="ECO:0000269" key="6">
    <source>
    </source>
</evidence>
<evidence type="ECO:0000269" key="7">
    <source>
    </source>
</evidence>
<evidence type="ECO:0000269" key="8">
    <source>
    </source>
</evidence>
<evidence type="ECO:0000269" key="9">
    <source>
    </source>
</evidence>
<evidence type="ECO:0000305" key="10"/>
<evidence type="ECO:0007744" key="11">
    <source>
    </source>
</evidence>
<evidence type="ECO:0007744" key="12">
    <source>
    </source>
</evidence>
<evidence type="ECO:0007744" key="13">
    <source>
    </source>
</evidence>
<evidence type="ECO:0007744" key="14">
    <source>
    </source>
</evidence>
<evidence type="ECO:0007744" key="15">
    <source>
    </source>
</evidence>
<evidence type="ECO:0007829" key="16">
    <source>
        <dbReference type="PDB" id="2FME"/>
    </source>
</evidence>
<evidence type="ECO:0007829" key="17">
    <source>
        <dbReference type="PDB" id="2PG2"/>
    </source>
</evidence>
<evidence type="ECO:0007829" key="18">
    <source>
        <dbReference type="PDB" id="2WOG"/>
    </source>
</evidence>
<evidence type="ECO:0007829" key="19">
    <source>
        <dbReference type="PDB" id="3CJO"/>
    </source>
</evidence>
<evidence type="ECO:0007829" key="20">
    <source>
        <dbReference type="PDB" id="3HQD"/>
    </source>
</evidence>
<evidence type="ECO:0007829" key="21">
    <source>
        <dbReference type="PDB" id="3L9H"/>
    </source>
</evidence>
<evidence type="ECO:0007829" key="22">
    <source>
        <dbReference type="PDB" id="3ZCW"/>
    </source>
</evidence>
<evidence type="ECO:0007829" key="23">
    <source>
        <dbReference type="PDB" id="4BXN"/>
    </source>
</evidence>
<evidence type="ECO:0007829" key="24">
    <source>
        <dbReference type="PDB" id="4ZHI"/>
    </source>
</evidence>
<evidence type="ECO:0007829" key="25">
    <source>
        <dbReference type="PDB" id="5JV3"/>
    </source>
</evidence>
<evidence type="ECO:0007829" key="26">
    <source>
        <dbReference type="PDB" id="5ZO7"/>
    </source>
</evidence>
<evidence type="ECO:0007829" key="27">
    <source>
        <dbReference type="PDB" id="6TLE"/>
    </source>
</evidence>
<evidence type="ECO:0007829" key="28">
    <source>
        <dbReference type="PDB" id="6TRL"/>
    </source>
</evidence>
<dbReference type="EMBL" id="X85137">
    <property type="protein sequence ID" value="CAA59449.1"/>
    <property type="molecule type" value="mRNA"/>
</dbReference>
<dbReference type="EMBL" id="U37426">
    <property type="protein sequence ID" value="AAA86132.1"/>
    <property type="molecule type" value="mRNA"/>
</dbReference>
<dbReference type="EMBL" id="AL360222">
    <property type="status" value="NOT_ANNOTATED_CDS"/>
    <property type="molecule type" value="Genomic_DNA"/>
</dbReference>
<dbReference type="EMBL" id="AL356128">
    <property type="status" value="NOT_ANNOTATED_CDS"/>
    <property type="molecule type" value="Genomic_DNA"/>
</dbReference>
<dbReference type="EMBL" id="BC126211">
    <property type="protein sequence ID" value="AAI26212.1"/>
    <property type="molecule type" value="mRNA"/>
</dbReference>
<dbReference type="EMBL" id="BC136474">
    <property type="protein sequence ID" value="AAI36475.1"/>
    <property type="molecule type" value="mRNA"/>
</dbReference>
<dbReference type="EMBL" id="L40372">
    <property type="protein sequence ID" value="AAC41739.1"/>
    <property type="molecule type" value="mRNA"/>
</dbReference>
<dbReference type="CCDS" id="CCDS7422.1"/>
<dbReference type="PIR" id="G02157">
    <property type="entry name" value="G02157"/>
</dbReference>
<dbReference type="RefSeq" id="NP_004514.2">
    <property type="nucleotide sequence ID" value="NM_004523.3"/>
</dbReference>
<dbReference type="PDB" id="1II6">
    <property type="method" value="X-ray"/>
    <property type="resolution" value="2.10 A"/>
    <property type="chains" value="A/B=1-368"/>
</dbReference>
<dbReference type="PDB" id="1Q0B">
    <property type="method" value="X-ray"/>
    <property type="resolution" value="1.90 A"/>
    <property type="chains" value="A/B=2-368"/>
</dbReference>
<dbReference type="PDB" id="1X88">
    <property type="method" value="X-ray"/>
    <property type="resolution" value="1.80 A"/>
    <property type="chains" value="A/B=10-368"/>
</dbReference>
<dbReference type="PDB" id="1YRS">
    <property type="method" value="X-ray"/>
    <property type="resolution" value="2.50 A"/>
    <property type="chains" value="A/B=1-368"/>
</dbReference>
<dbReference type="PDB" id="2FKY">
    <property type="method" value="X-ray"/>
    <property type="resolution" value="2.30 A"/>
    <property type="chains" value="A/B=2-368"/>
</dbReference>
<dbReference type="PDB" id="2FL2">
    <property type="method" value="X-ray"/>
    <property type="resolution" value="2.50 A"/>
    <property type="chains" value="A/B=2-368"/>
</dbReference>
<dbReference type="PDB" id="2FL6">
    <property type="method" value="X-ray"/>
    <property type="resolution" value="2.50 A"/>
    <property type="chains" value="A/B=2-368"/>
</dbReference>
<dbReference type="PDB" id="2FME">
    <property type="method" value="X-ray"/>
    <property type="resolution" value="2.10 A"/>
    <property type="chains" value="A/B=1-368"/>
</dbReference>
<dbReference type="PDB" id="2G1Q">
    <property type="method" value="X-ray"/>
    <property type="resolution" value="2.51 A"/>
    <property type="chains" value="A/B=1-368"/>
</dbReference>
<dbReference type="PDB" id="2GM1">
    <property type="method" value="X-ray"/>
    <property type="resolution" value="2.30 A"/>
    <property type="chains" value="A/B/D/E=1-368"/>
</dbReference>
<dbReference type="PDB" id="2IEH">
    <property type="method" value="X-ray"/>
    <property type="resolution" value="2.70 A"/>
    <property type="chains" value="A/B=2-368"/>
</dbReference>
<dbReference type="PDB" id="2PG2">
    <property type="method" value="X-ray"/>
    <property type="resolution" value="1.85 A"/>
    <property type="chains" value="A/B=1-368"/>
</dbReference>
<dbReference type="PDB" id="2Q2Y">
    <property type="method" value="X-ray"/>
    <property type="resolution" value="2.50 A"/>
    <property type="chains" value="A/B=2-368"/>
</dbReference>
<dbReference type="PDB" id="2Q2Z">
    <property type="method" value="X-ray"/>
    <property type="resolution" value="3.00 A"/>
    <property type="chains" value="A/B=2-368"/>
</dbReference>
<dbReference type="PDB" id="2UYI">
    <property type="method" value="X-ray"/>
    <property type="resolution" value="2.10 A"/>
    <property type="chains" value="A/B=1-368"/>
</dbReference>
<dbReference type="PDB" id="2UYM">
    <property type="method" value="X-ray"/>
    <property type="resolution" value="2.11 A"/>
    <property type="chains" value="A/B=1-368"/>
</dbReference>
<dbReference type="PDB" id="2WOG">
    <property type="method" value="X-ray"/>
    <property type="resolution" value="2.00 A"/>
    <property type="chains" value="A/B/C=1-368"/>
</dbReference>
<dbReference type="PDB" id="2X2R">
    <property type="method" value="X-ray"/>
    <property type="resolution" value="2.20 A"/>
    <property type="chains" value="A/B/C=1-368"/>
</dbReference>
<dbReference type="PDB" id="2X7C">
    <property type="method" value="X-ray"/>
    <property type="resolution" value="1.90 A"/>
    <property type="chains" value="A/B=1-368"/>
</dbReference>
<dbReference type="PDB" id="2X7D">
    <property type="method" value="X-ray"/>
    <property type="resolution" value="2.30 A"/>
    <property type="chains" value="A/B=1-368"/>
</dbReference>
<dbReference type="PDB" id="2X7E">
    <property type="method" value="X-ray"/>
    <property type="resolution" value="2.40 A"/>
    <property type="chains" value="A/B=1-368"/>
</dbReference>
<dbReference type="PDB" id="2XAE">
    <property type="method" value="X-ray"/>
    <property type="resolution" value="2.60 A"/>
    <property type="chains" value="A/B/C=1-368"/>
</dbReference>
<dbReference type="PDB" id="3CJO">
    <property type="method" value="X-ray"/>
    <property type="resolution" value="2.28 A"/>
    <property type="chains" value="A/B=2-368"/>
</dbReference>
<dbReference type="PDB" id="3HQD">
    <property type="method" value="X-ray"/>
    <property type="resolution" value="2.19 A"/>
    <property type="chains" value="A/B=1-369"/>
</dbReference>
<dbReference type="PDB" id="3K3B">
    <property type="method" value="X-ray"/>
    <property type="resolution" value="2.40 A"/>
    <property type="chains" value="A/B=1-368"/>
</dbReference>
<dbReference type="PDB" id="3K5E">
    <property type="method" value="X-ray"/>
    <property type="resolution" value="1.97 A"/>
    <property type="chains" value="A/B=1-368"/>
</dbReference>
<dbReference type="PDB" id="3KEN">
    <property type="method" value="X-ray"/>
    <property type="resolution" value="2.50 A"/>
    <property type="chains" value="A=1-369"/>
</dbReference>
<dbReference type="PDB" id="3L9H">
    <property type="method" value="X-ray"/>
    <property type="resolution" value="2.00 A"/>
    <property type="chains" value="A/B=1-368"/>
</dbReference>
<dbReference type="PDB" id="3WPN">
    <property type="method" value="X-ray"/>
    <property type="resolution" value="2.80 A"/>
    <property type="chains" value="A=1-369"/>
</dbReference>
<dbReference type="PDB" id="3ZCW">
    <property type="method" value="X-ray"/>
    <property type="resolution" value="1.69 A"/>
    <property type="chains" value="A=16-363"/>
</dbReference>
<dbReference type="PDB" id="4A1Z">
    <property type="method" value="X-ray"/>
    <property type="resolution" value="2.80 A"/>
    <property type="chains" value="A/B=1-368"/>
</dbReference>
<dbReference type="PDB" id="4A28">
    <property type="method" value="X-ray"/>
    <property type="resolution" value="2.55 A"/>
    <property type="chains" value="A/B=1-368"/>
</dbReference>
<dbReference type="PDB" id="4A50">
    <property type="method" value="X-ray"/>
    <property type="resolution" value="2.75 A"/>
    <property type="chains" value="A=1-368"/>
</dbReference>
<dbReference type="PDB" id="4A51">
    <property type="method" value="X-ray"/>
    <property type="resolution" value="2.75 A"/>
    <property type="chains" value="A/B/C/D/E/F/G=1-368"/>
</dbReference>
<dbReference type="PDB" id="4A5Y">
    <property type="method" value="X-ray"/>
    <property type="resolution" value="2.45 A"/>
    <property type="chains" value="A/B/C=1-368"/>
</dbReference>
<dbReference type="PDB" id="4AP0">
    <property type="method" value="X-ray"/>
    <property type="resolution" value="2.59 A"/>
    <property type="chains" value="A/B/C/D=1-368"/>
</dbReference>
<dbReference type="PDB" id="4AQV">
    <property type="method" value="EM"/>
    <property type="resolution" value="9.70 A"/>
    <property type="chains" value="C=1-367"/>
</dbReference>
<dbReference type="PDB" id="4AQW">
    <property type="method" value="EM"/>
    <property type="resolution" value="9.50 A"/>
    <property type="chains" value="C=1-367"/>
</dbReference>
<dbReference type="PDB" id="4AS7">
    <property type="method" value="X-ray"/>
    <property type="resolution" value="2.40 A"/>
    <property type="chains" value="A=1-368"/>
</dbReference>
<dbReference type="PDB" id="4B7B">
    <property type="method" value="X-ray"/>
    <property type="resolution" value="2.50 A"/>
    <property type="chains" value="A=1-368"/>
</dbReference>
<dbReference type="PDB" id="4BBG">
    <property type="method" value="X-ray"/>
    <property type="resolution" value="2.75 A"/>
    <property type="chains" value="A=1-368"/>
</dbReference>
<dbReference type="PDB" id="4BXN">
    <property type="method" value="X-ray"/>
    <property type="resolution" value="2.79 A"/>
    <property type="chains" value="A/B=1-368"/>
</dbReference>
<dbReference type="PDB" id="4CK5">
    <property type="method" value="EM"/>
    <property type="resolution" value="10.00 A"/>
    <property type="chains" value="C=1-367"/>
</dbReference>
<dbReference type="PDB" id="4CK6">
    <property type="method" value="EM"/>
    <property type="resolution" value="9.20 A"/>
    <property type="chains" value="C=1-367"/>
</dbReference>
<dbReference type="PDB" id="4CK7">
    <property type="method" value="EM"/>
    <property type="resolution" value="9.20 A"/>
    <property type="chains" value="C=1-367"/>
</dbReference>
<dbReference type="PDB" id="4ZCA">
    <property type="method" value="X-ray"/>
    <property type="resolution" value="2.30 A"/>
    <property type="chains" value="A/B=1-369"/>
</dbReference>
<dbReference type="PDB" id="4ZHI">
    <property type="method" value="X-ray"/>
    <property type="resolution" value="2.30 A"/>
    <property type="chains" value="A/B=1-369"/>
</dbReference>
<dbReference type="PDB" id="5JV3">
    <property type="method" value="X-ray"/>
    <property type="resolution" value="2.01 A"/>
    <property type="chains" value="A/B/C/D=366-391"/>
</dbReference>
<dbReference type="PDB" id="5ZO7">
    <property type="method" value="X-ray"/>
    <property type="resolution" value="2.60 A"/>
    <property type="chains" value="A/B=17-369"/>
</dbReference>
<dbReference type="PDB" id="5ZO8">
    <property type="method" value="X-ray"/>
    <property type="resolution" value="2.20 A"/>
    <property type="chains" value="A/B=17-369"/>
</dbReference>
<dbReference type="PDB" id="5ZO9">
    <property type="method" value="X-ray"/>
    <property type="resolution" value="2.70 A"/>
    <property type="chains" value="A/B=17-369"/>
</dbReference>
<dbReference type="PDB" id="6G6Y">
    <property type="method" value="X-ray"/>
    <property type="resolution" value="1.80 A"/>
    <property type="chains" value="A=1-368"/>
</dbReference>
<dbReference type="PDB" id="6G6Z">
    <property type="method" value="X-ray"/>
    <property type="resolution" value="2.80 A"/>
    <property type="chains" value="A=1-368"/>
</dbReference>
<dbReference type="PDB" id="6HKX">
    <property type="method" value="X-ray"/>
    <property type="resolution" value="2.80 A"/>
    <property type="chains" value="A/B=1-368"/>
</dbReference>
<dbReference type="PDB" id="6HKY">
    <property type="method" value="X-ray"/>
    <property type="resolution" value="2.75 A"/>
    <property type="chains" value="A/B/C=1-368"/>
</dbReference>
<dbReference type="PDB" id="6TA3">
    <property type="method" value="EM"/>
    <property type="resolution" value="3.80 A"/>
    <property type="chains" value="K=1-369"/>
</dbReference>
<dbReference type="PDB" id="6TA4">
    <property type="method" value="EM"/>
    <property type="resolution" value="6.10 A"/>
    <property type="chains" value="K=1-369"/>
</dbReference>
<dbReference type="PDB" id="6TIW">
    <property type="method" value="EM"/>
    <property type="resolution" value="1.09 A"/>
    <property type="chains" value="K=1-369"/>
</dbReference>
<dbReference type="PDB" id="6TLE">
    <property type="method" value="X-ray"/>
    <property type="resolution" value="1.75 A"/>
    <property type="chains" value="A/B=2-368"/>
</dbReference>
<dbReference type="PDB" id="6TRL">
    <property type="method" value="X-ray"/>
    <property type="resolution" value="2.20 A"/>
    <property type="chains" value="A/B=2-368"/>
</dbReference>
<dbReference type="PDB" id="6Y1I">
    <property type="method" value="X-ray"/>
    <property type="resolution" value="3.00 A"/>
    <property type="chains" value="A/B/C=1-368"/>
</dbReference>
<dbReference type="PDB" id="8YHH">
    <property type="method" value="X-ray"/>
    <property type="resolution" value="1.95 A"/>
    <property type="chains" value="A/B=1-368"/>
</dbReference>
<dbReference type="PDBsum" id="1II6"/>
<dbReference type="PDBsum" id="1Q0B"/>
<dbReference type="PDBsum" id="1X88"/>
<dbReference type="PDBsum" id="1YRS"/>
<dbReference type="PDBsum" id="2FKY"/>
<dbReference type="PDBsum" id="2FL2"/>
<dbReference type="PDBsum" id="2FL6"/>
<dbReference type="PDBsum" id="2FME"/>
<dbReference type="PDBsum" id="2G1Q"/>
<dbReference type="PDBsum" id="2GM1"/>
<dbReference type="PDBsum" id="2IEH"/>
<dbReference type="PDBsum" id="2PG2"/>
<dbReference type="PDBsum" id="2Q2Y"/>
<dbReference type="PDBsum" id="2Q2Z"/>
<dbReference type="PDBsum" id="2UYI"/>
<dbReference type="PDBsum" id="2UYM"/>
<dbReference type="PDBsum" id="2WOG"/>
<dbReference type="PDBsum" id="2X2R"/>
<dbReference type="PDBsum" id="2X7C"/>
<dbReference type="PDBsum" id="2X7D"/>
<dbReference type="PDBsum" id="2X7E"/>
<dbReference type="PDBsum" id="2XAE"/>
<dbReference type="PDBsum" id="3CJO"/>
<dbReference type="PDBsum" id="3HQD"/>
<dbReference type="PDBsum" id="3K3B"/>
<dbReference type="PDBsum" id="3K5E"/>
<dbReference type="PDBsum" id="3KEN"/>
<dbReference type="PDBsum" id="3L9H"/>
<dbReference type="PDBsum" id="3WPN"/>
<dbReference type="PDBsum" id="3ZCW"/>
<dbReference type="PDBsum" id="4A1Z"/>
<dbReference type="PDBsum" id="4A28"/>
<dbReference type="PDBsum" id="4A50"/>
<dbReference type="PDBsum" id="4A51"/>
<dbReference type="PDBsum" id="4A5Y"/>
<dbReference type="PDBsum" id="4AP0"/>
<dbReference type="PDBsum" id="4AQV"/>
<dbReference type="PDBsum" id="4AQW"/>
<dbReference type="PDBsum" id="4AS7"/>
<dbReference type="PDBsum" id="4B7B"/>
<dbReference type="PDBsum" id="4BBG"/>
<dbReference type="PDBsum" id="4BXN"/>
<dbReference type="PDBsum" id="4CK5"/>
<dbReference type="PDBsum" id="4CK6"/>
<dbReference type="PDBsum" id="4CK7"/>
<dbReference type="PDBsum" id="4ZCA"/>
<dbReference type="PDBsum" id="4ZHI"/>
<dbReference type="PDBsum" id="5JV3"/>
<dbReference type="PDBsum" id="5ZO7"/>
<dbReference type="PDBsum" id="5ZO8"/>
<dbReference type="PDBsum" id="5ZO9"/>
<dbReference type="PDBsum" id="6G6Y"/>
<dbReference type="PDBsum" id="6G6Z"/>
<dbReference type="PDBsum" id="6HKX"/>
<dbReference type="PDBsum" id="6HKY"/>
<dbReference type="PDBsum" id="6TA3"/>
<dbReference type="PDBsum" id="6TA4"/>
<dbReference type="PDBsum" id="6TIW"/>
<dbReference type="PDBsum" id="6TLE"/>
<dbReference type="PDBsum" id="6TRL"/>
<dbReference type="PDBsum" id="6Y1I"/>
<dbReference type="PDBsum" id="8YHH"/>
<dbReference type="EMDB" id="EMD-10421"/>
<dbReference type="EMDB" id="EMD-10422"/>
<dbReference type="EMDB" id="EMD-2077"/>
<dbReference type="EMDB" id="EMD-2078"/>
<dbReference type="EMDB" id="EMD-2533"/>
<dbReference type="EMDB" id="EMD-2534"/>
<dbReference type="EMDB" id="EMD-2535"/>
<dbReference type="EMDB" id="EMD-2536"/>
<dbReference type="EMDB" id="EMD-2537"/>
<dbReference type="EMDB" id="EMD-2538"/>
<dbReference type="EMDB" id="EMD-2539"/>
<dbReference type="EMDB" id="EMD-2540"/>
<dbReference type="EMDB" id="EMD-2541"/>
<dbReference type="EMDB" id="EMD-2542"/>
<dbReference type="SMR" id="P52732"/>
<dbReference type="BioGRID" id="110030">
    <property type="interactions" value="266"/>
</dbReference>
<dbReference type="CORUM" id="P52732"/>
<dbReference type="DIP" id="DIP-53686N"/>
<dbReference type="FunCoup" id="P52732">
    <property type="interactions" value="1768"/>
</dbReference>
<dbReference type="IntAct" id="P52732">
    <property type="interactions" value="145"/>
</dbReference>
<dbReference type="MINT" id="P52732"/>
<dbReference type="STRING" id="9606.ENSP00000260731"/>
<dbReference type="BindingDB" id="P52732"/>
<dbReference type="ChEMBL" id="CHEMBL4581"/>
<dbReference type="DrugBank" id="DB08244">
    <property type="generic name" value="(1S)-1-CYCLOPROPYL-2-[(2S)-4-(2,5-DIFLUOROPHENYL)-2-PHENYL-2,5-DIHYDRO-1H-PYRROL-1-YL]-2-OXOETHANAMINE"/>
</dbReference>
<dbReference type="DrugBank" id="DB08246">
    <property type="generic name" value="(2S)-4-(2,5-DIFLUOROPHENYL)-N,N-DIMETHYL-2-PHENYL-2,5-DIHYDRO-1H-PYRROLE-1-CARBOXAMIDE"/>
</dbReference>
<dbReference type="DrugBank" id="DB08239">
    <property type="generic name" value="(2S)-4-(2,5-DIFLUOROPHENYL)-N-METHYL-2-PHENYL-N-PIPERIDIN-4-YL-2,5-DIHYDRO-1H-PYRROLE-1-CARBOXAMIDE"/>
</dbReference>
<dbReference type="DrugBank" id="DB07064">
    <property type="generic name" value="(4R)-4-(3-HYDROXYPHENYL)-N,N,7,8-TETRAMETHYL-3,4-DIHYDROISOQUINOLINE-2(1H)-CARBOXAMIDE"/>
</dbReference>
<dbReference type="DrugBank" id="DB08033">
    <property type="generic name" value="(5R)-N,N-DIETHYL-5-METHYL-2-[(THIOPHEN-2-YLCARBONYL)AMINO]-4,5,6,7-TETRAHYDRO-1-BENZOTHIOPHENE-3-CARBOXAMIDE"/>
</dbReference>
<dbReference type="DrugBank" id="DB08250">
    <property type="generic name" value="(5S)-5-(3-AMINOPROPYL)-3-(2,5-DIFLUOROPHENYL)-N-ETHYL-5-PHENYL-4,5-DIHYDRO-1H-PYRAZOLE-1-CARBOXAMIDE"/>
</dbReference>
<dbReference type="DrugBank" id="DB03996">
    <property type="generic name" value="3-[(5s)-1-Acetyl-3-(2-Chlorophenyl)-4,5-Dihydro-1h-Pyrazol-5-Yl]Phenol"/>
</dbReference>
<dbReference type="DrugBank" id="DB08198">
    <property type="generic name" value="[(4R)-4-(3-HYDROXYPHENYL)-1,6-DIMETHYL-2-THIOXO-1,2,3,4-TETRAHYDROPYRIMIDIN-5-YL](PHENYL)METHANONE"/>
</dbReference>
<dbReference type="DrugBank" id="DB11671">
    <property type="generic name" value="AZD-4877"/>
</dbReference>
<dbReference type="DrugBank" id="DB06040">
    <property type="generic name" value="Filanesib"/>
</dbReference>
<dbReference type="DrugBank" id="DB06188">
    <property type="generic name" value="Ispinesib"/>
</dbReference>
<dbReference type="DrugBank" id="DB11861">
    <property type="generic name" value="Litronesib"/>
</dbReference>
<dbReference type="DrugBank" id="DB08037">
    <property type="generic name" value="MK-0731"/>
</dbReference>
<dbReference type="DrugBank" id="DB04331">
    <property type="generic name" value="Monastrol"/>
</dbReference>
<dbReference type="DrugBank" id="DB08032">
    <property type="generic name" value="N,N-DIETHYL-2-[(2-THIENYLCARBONYL)AMINO]-4,5,6,7-TETRAHYDRO-1-BENZOTHIOPHENE-3-CARBOXAMIDE"/>
</dbReference>
<dbReference type="DrugCentral" id="P52732"/>
<dbReference type="GuidetoPHARMACOLOGY" id="2788"/>
<dbReference type="GlyGen" id="P52732">
    <property type="glycosylation" value="2 sites, 1 N-linked glycan (1 site), 1 O-linked glycan (1 site)"/>
</dbReference>
<dbReference type="iPTMnet" id="P52732"/>
<dbReference type="MetOSite" id="P52732"/>
<dbReference type="PhosphoSitePlus" id="P52732"/>
<dbReference type="SwissPalm" id="P52732"/>
<dbReference type="BioMuta" id="KIF11"/>
<dbReference type="DMDM" id="116242604"/>
<dbReference type="jPOST" id="P52732"/>
<dbReference type="MassIVE" id="P52732"/>
<dbReference type="PaxDb" id="9606-ENSP00000260731"/>
<dbReference type="PeptideAtlas" id="P52732"/>
<dbReference type="ProteomicsDB" id="56504"/>
<dbReference type="Pumba" id="P52732"/>
<dbReference type="Antibodypedia" id="1871">
    <property type="antibodies" value="464 antibodies from 40 providers"/>
</dbReference>
<dbReference type="DNASU" id="3832"/>
<dbReference type="Ensembl" id="ENST00000260731.5">
    <property type="protein sequence ID" value="ENSP00000260731.3"/>
    <property type="gene ID" value="ENSG00000138160.7"/>
</dbReference>
<dbReference type="GeneID" id="3832"/>
<dbReference type="KEGG" id="hsa:3832"/>
<dbReference type="MANE-Select" id="ENST00000260731.5">
    <property type="protein sequence ID" value="ENSP00000260731.3"/>
    <property type="RefSeq nucleotide sequence ID" value="NM_004523.4"/>
    <property type="RefSeq protein sequence ID" value="NP_004514.2"/>
</dbReference>
<dbReference type="UCSC" id="uc001kic.4">
    <property type="organism name" value="human"/>
</dbReference>
<dbReference type="AGR" id="HGNC:6388"/>
<dbReference type="CTD" id="3832"/>
<dbReference type="DisGeNET" id="3832"/>
<dbReference type="GeneCards" id="KIF11"/>
<dbReference type="HGNC" id="HGNC:6388">
    <property type="gene designation" value="KIF11"/>
</dbReference>
<dbReference type="HPA" id="ENSG00000138160">
    <property type="expression patterns" value="Tissue enhanced (bone marrow, lymphoid tissue)"/>
</dbReference>
<dbReference type="MalaCards" id="KIF11"/>
<dbReference type="MIM" id="148760">
    <property type="type" value="gene"/>
</dbReference>
<dbReference type="MIM" id="152950">
    <property type="type" value="phenotype"/>
</dbReference>
<dbReference type="neXtProt" id="NX_P52732"/>
<dbReference type="OpenTargets" id="ENSG00000138160"/>
<dbReference type="Orphanet" id="2526">
    <property type="disease" value="Microcephaly-lymphedema-chorioretinopathy syndrome"/>
</dbReference>
<dbReference type="PharmGKB" id="PA30177"/>
<dbReference type="VEuPathDB" id="HostDB:ENSG00000138160"/>
<dbReference type="eggNOG" id="KOG0243">
    <property type="taxonomic scope" value="Eukaryota"/>
</dbReference>
<dbReference type="GeneTree" id="ENSGT00940000155921"/>
<dbReference type="HOGENOM" id="CLU_001485_33_4_1"/>
<dbReference type="InParanoid" id="P52732"/>
<dbReference type="OMA" id="CQLISLW"/>
<dbReference type="OrthoDB" id="3176171at2759"/>
<dbReference type="PAN-GO" id="P52732">
    <property type="GO annotations" value="6 GO annotations based on evolutionary models"/>
</dbReference>
<dbReference type="PhylomeDB" id="P52732"/>
<dbReference type="TreeFam" id="TF105230"/>
<dbReference type="BRENDA" id="5.6.1.3">
    <property type="organism ID" value="2681"/>
</dbReference>
<dbReference type="PathwayCommons" id="P52732"/>
<dbReference type="Reactome" id="R-HSA-2132295">
    <property type="pathway name" value="MHC class II antigen presentation"/>
</dbReference>
<dbReference type="Reactome" id="R-HSA-6811434">
    <property type="pathway name" value="COPI-dependent Golgi-to-ER retrograde traffic"/>
</dbReference>
<dbReference type="Reactome" id="R-HSA-983189">
    <property type="pathway name" value="Kinesins"/>
</dbReference>
<dbReference type="SignaLink" id="P52732"/>
<dbReference type="SIGNOR" id="P52732"/>
<dbReference type="BioGRID-ORCS" id="3832">
    <property type="hits" value="821 hits in 1170 CRISPR screens"/>
</dbReference>
<dbReference type="CD-CODE" id="8C2F96ED">
    <property type="entry name" value="Centrosome"/>
</dbReference>
<dbReference type="ChiTaRS" id="KIF11">
    <property type="organism name" value="human"/>
</dbReference>
<dbReference type="EvolutionaryTrace" id="P52732"/>
<dbReference type="GeneWiki" id="Kinesin_family_member_11"/>
<dbReference type="GenomeRNAi" id="3832"/>
<dbReference type="Pharos" id="P52732">
    <property type="development level" value="Tchem"/>
</dbReference>
<dbReference type="PRO" id="PR:P52732"/>
<dbReference type="Proteomes" id="UP000005640">
    <property type="component" value="Chromosome 10"/>
</dbReference>
<dbReference type="RNAct" id="P52732">
    <property type="molecule type" value="protein"/>
</dbReference>
<dbReference type="Bgee" id="ENSG00000138160">
    <property type="expression patterns" value="Expressed in ventricular zone and 132 other cell types or tissues"/>
</dbReference>
<dbReference type="GO" id="GO:0036064">
    <property type="term" value="C:ciliary basal body"/>
    <property type="evidence" value="ECO:0000314"/>
    <property type="project" value="HPA"/>
</dbReference>
<dbReference type="GO" id="GO:0005829">
    <property type="term" value="C:cytosol"/>
    <property type="evidence" value="ECO:0000314"/>
    <property type="project" value="HPA"/>
</dbReference>
<dbReference type="GO" id="GO:0043231">
    <property type="term" value="C:intracellular membrane-bounded organelle"/>
    <property type="evidence" value="ECO:0000314"/>
    <property type="project" value="HPA"/>
</dbReference>
<dbReference type="GO" id="GO:0005871">
    <property type="term" value="C:kinesin complex"/>
    <property type="evidence" value="ECO:0000304"/>
    <property type="project" value="ProtInc"/>
</dbReference>
<dbReference type="GO" id="GO:0016020">
    <property type="term" value="C:membrane"/>
    <property type="evidence" value="ECO:0007005"/>
    <property type="project" value="UniProtKB"/>
</dbReference>
<dbReference type="GO" id="GO:0005874">
    <property type="term" value="C:microtubule"/>
    <property type="evidence" value="ECO:0000314"/>
    <property type="project" value="UniProtKB"/>
</dbReference>
<dbReference type="GO" id="GO:0072686">
    <property type="term" value="C:mitotic spindle"/>
    <property type="evidence" value="ECO:0000314"/>
    <property type="project" value="HPA"/>
</dbReference>
<dbReference type="GO" id="GO:0005634">
    <property type="term" value="C:nucleus"/>
    <property type="evidence" value="ECO:0000318"/>
    <property type="project" value="GO_Central"/>
</dbReference>
<dbReference type="GO" id="GO:0032991">
    <property type="term" value="C:protein-containing complex"/>
    <property type="evidence" value="ECO:0000353"/>
    <property type="project" value="UniProtKB"/>
</dbReference>
<dbReference type="GO" id="GO:0005819">
    <property type="term" value="C:spindle"/>
    <property type="evidence" value="ECO:0000314"/>
    <property type="project" value="UniProtKB"/>
</dbReference>
<dbReference type="GO" id="GO:0000922">
    <property type="term" value="C:spindle pole"/>
    <property type="evidence" value="ECO:0007669"/>
    <property type="project" value="UniProtKB-SubCell"/>
</dbReference>
<dbReference type="GO" id="GO:0005524">
    <property type="term" value="F:ATP binding"/>
    <property type="evidence" value="ECO:0007669"/>
    <property type="project" value="UniProtKB-KW"/>
</dbReference>
<dbReference type="GO" id="GO:0008017">
    <property type="term" value="F:microtubule binding"/>
    <property type="evidence" value="ECO:0007669"/>
    <property type="project" value="InterPro"/>
</dbReference>
<dbReference type="GO" id="GO:0003777">
    <property type="term" value="F:microtubule motor activity"/>
    <property type="evidence" value="ECO:0000304"/>
    <property type="project" value="ProtInc"/>
</dbReference>
<dbReference type="GO" id="GO:0008574">
    <property type="term" value="F:plus-end-directed microtubule motor activity"/>
    <property type="evidence" value="ECO:0000318"/>
    <property type="project" value="GO_Central"/>
</dbReference>
<dbReference type="GO" id="GO:0019901">
    <property type="term" value="F:protein kinase binding"/>
    <property type="evidence" value="ECO:0000353"/>
    <property type="project" value="UniProtKB"/>
</dbReference>
<dbReference type="GO" id="GO:0051301">
    <property type="term" value="P:cell division"/>
    <property type="evidence" value="ECO:0007669"/>
    <property type="project" value="UniProtKB-KW"/>
</dbReference>
<dbReference type="GO" id="GO:0007018">
    <property type="term" value="P:microtubule-based movement"/>
    <property type="evidence" value="ECO:0007669"/>
    <property type="project" value="InterPro"/>
</dbReference>
<dbReference type="GO" id="GO:0000278">
    <property type="term" value="P:mitotic cell cycle"/>
    <property type="evidence" value="ECO:0000304"/>
    <property type="project" value="ProtInc"/>
</dbReference>
<dbReference type="GO" id="GO:0007100">
    <property type="term" value="P:mitotic centrosome separation"/>
    <property type="evidence" value="ECO:0007669"/>
    <property type="project" value="Ensembl"/>
</dbReference>
<dbReference type="GO" id="GO:0090307">
    <property type="term" value="P:mitotic spindle assembly"/>
    <property type="evidence" value="ECO:0000314"/>
    <property type="project" value="UniProtKB"/>
</dbReference>
<dbReference type="GO" id="GO:0007052">
    <property type="term" value="P:mitotic spindle organization"/>
    <property type="evidence" value="ECO:0000304"/>
    <property type="project" value="ProtInc"/>
</dbReference>
<dbReference type="GO" id="GO:0046602">
    <property type="term" value="P:regulation of mitotic centrosome separation"/>
    <property type="evidence" value="ECO:0000315"/>
    <property type="project" value="UniProtKB"/>
</dbReference>
<dbReference type="GO" id="GO:0051231">
    <property type="term" value="P:spindle elongation"/>
    <property type="evidence" value="ECO:0000318"/>
    <property type="project" value="GO_Central"/>
</dbReference>
<dbReference type="GO" id="GO:0007051">
    <property type="term" value="P:spindle organization"/>
    <property type="evidence" value="ECO:0000315"/>
    <property type="project" value="UniProtKB"/>
</dbReference>
<dbReference type="CDD" id="cd01364">
    <property type="entry name" value="KISc_BimC_Eg5"/>
    <property type="match status" value="1"/>
</dbReference>
<dbReference type="FunFam" id="3.40.850.10:FF:000035">
    <property type="entry name" value="Kinesin-like protein KIF11"/>
    <property type="match status" value="1"/>
</dbReference>
<dbReference type="Gene3D" id="3.40.850.10">
    <property type="entry name" value="Kinesin motor domain"/>
    <property type="match status" value="1"/>
</dbReference>
<dbReference type="InterPro" id="IPR047149">
    <property type="entry name" value="KIF11-like"/>
</dbReference>
<dbReference type="InterPro" id="IPR047241">
    <property type="entry name" value="KIF11-like_kin_motor_dom"/>
</dbReference>
<dbReference type="InterPro" id="IPR025901">
    <property type="entry name" value="Kinesin-assoc_MT-bd_dom"/>
</dbReference>
<dbReference type="InterPro" id="IPR019821">
    <property type="entry name" value="Kinesin_motor_CS"/>
</dbReference>
<dbReference type="InterPro" id="IPR001752">
    <property type="entry name" value="Kinesin_motor_dom"/>
</dbReference>
<dbReference type="InterPro" id="IPR036961">
    <property type="entry name" value="Kinesin_motor_dom_sf"/>
</dbReference>
<dbReference type="InterPro" id="IPR027417">
    <property type="entry name" value="P-loop_NTPase"/>
</dbReference>
<dbReference type="PANTHER" id="PTHR47970">
    <property type="entry name" value="KINESIN-LIKE PROTEIN KIF11"/>
    <property type="match status" value="1"/>
</dbReference>
<dbReference type="PANTHER" id="PTHR47970:SF26">
    <property type="entry name" value="KINESIN-LIKE PROTEIN KIF11"/>
    <property type="match status" value="1"/>
</dbReference>
<dbReference type="Pfam" id="PF00225">
    <property type="entry name" value="Kinesin"/>
    <property type="match status" value="1"/>
</dbReference>
<dbReference type="Pfam" id="PF13931">
    <property type="entry name" value="Microtub_bind"/>
    <property type="match status" value="1"/>
</dbReference>
<dbReference type="PRINTS" id="PR00380">
    <property type="entry name" value="KINESINHEAVY"/>
</dbReference>
<dbReference type="SMART" id="SM00129">
    <property type="entry name" value="KISc"/>
    <property type="match status" value="1"/>
</dbReference>
<dbReference type="SUPFAM" id="SSF52540">
    <property type="entry name" value="P-loop containing nucleoside triphosphate hydrolases"/>
    <property type="match status" value="1"/>
</dbReference>
<dbReference type="PROSITE" id="PS00411">
    <property type="entry name" value="KINESIN_MOTOR_1"/>
    <property type="match status" value="1"/>
</dbReference>
<dbReference type="PROSITE" id="PS50067">
    <property type="entry name" value="KINESIN_MOTOR_2"/>
    <property type="match status" value="1"/>
</dbReference>
<protein>
    <recommendedName>
        <fullName>Kinesin-like protein KIF11</fullName>
    </recommendedName>
    <alternativeName>
        <fullName>Kinesin-like protein 1</fullName>
    </alternativeName>
    <alternativeName>
        <fullName>Kinesin-like spindle protein HKSP</fullName>
    </alternativeName>
    <alternativeName>
        <fullName>Kinesin-related motor protein Eg5</fullName>
    </alternativeName>
    <alternativeName>
        <fullName>Thyroid receptor-interacting protein 5</fullName>
        <shortName>TR-interacting protein 5</shortName>
        <shortName>TRIP-5</shortName>
    </alternativeName>
</protein>
<keyword id="KW-0002">3D-structure</keyword>
<keyword id="KW-0007">Acetylation</keyword>
<keyword id="KW-0067">ATP-binding</keyword>
<keyword id="KW-0131">Cell cycle</keyword>
<keyword id="KW-0132">Cell division</keyword>
<keyword id="KW-0175">Coiled coil</keyword>
<keyword id="KW-0963">Cytoplasm</keyword>
<keyword id="KW-0206">Cytoskeleton</keyword>
<keyword id="KW-0225">Disease variant</keyword>
<keyword id="KW-1017">Isopeptide bond</keyword>
<keyword id="KW-0493">Microtubule</keyword>
<keyword id="KW-0498">Mitosis</keyword>
<keyword id="KW-0505">Motor protein</keyword>
<keyword id="KW-0547">Nucleotide-binding</keyword>
<keyword id="KW-0597">Phosphoprotein</keyword>
<keyword id="KW-1267">Proteomics identification</keyword>
<keyword id="KW-1185">Reference proteome</keyword>
<keyword id="KW-0832">Ubl conjugation</keyword>
<sequence length="1056" mass="119159">MASQPNSSAKKKEEKGKNIQVVVRCRPFNLAERKASAHSIVECDPVRKEVSVRTGGLADKSSRKTYTFDMVFGASTKQIDVYRSVVCPILDEVIMGYNCTIFAYGQTGTGKTFTMEGERSPNEEYTWEEDPLAGIIPRTLHQIFEKLTDNGTEFSVKVSLLEIYNEELFDLLNPSSDVSERLQMFDDPRNKRGVIIKGLEEITVHNKDEVYQILEKGAAKRTTAATLMNAYSSRSHSVFSVTIHMKETTIDGEELVKIGKLNLVDLAGSENIGRSGAVDKRAREAGNINQSLLTLGRVITALVERTPHVPYRESKLTRILQDSLGGRTRTSIIATISPASLNLEETLSTLEYAHRAKNILNKPEVNQKLTKKALIKEYTEEIERLKRDLAAAREKNGVYISEENFRVMSGKLTVQEEQIVELIEKIGAVEEELNRVTELFMDNKNELDQCKSDLQNKTQELETTQKHLQETKLQLVKEEYITSALESTEEKLHDAASKLLNTVEETTKDVSGLHSKLDRKKAVDQHNAEAQDIFGKNLNSLFNNMEELIKDGSSKQKAMLEVHKTLFGNLLSSSVSALDTITTVALGSLTSIPENVSTHVSQIFNMILKEQSLAAESKTVLQELINVLKTDLLSSLEMILSPTVVSILKINSQLKHIFKTSLTVADKIEDQKKELDGFLSILCNNLHELQENTICSLVESQKQCGNLTEDLKTIKQTHSQELCKLMNLWTERFCALEEKCENIQKPLSSVQENIQQKSKDIVNKMTFHSQKFCADSDGFSQELRNFNQEGTKLVEESVKHSDKLNGNLEKISQETEQRCESLNTRTVYFSEQWVSSLNEREQELHNLLEVVSQCCEASSSDITEKSDGRKAAHEKQHNIFLDQMTIDEDKLIAQNLELNETIKIGLTKLNCFLEQDLKLDIPTGTTPQRKSYLYPSTLVRTEPREHLLDQLKRKQPELLMMLNCSENNKEETIPDVDVEEAVLGQYTEEPLSQEPSVDAGVDCSSIGGVPFFQHKKSHGKDKENRGINTLERSKVEETTEHLVTKSRLPLRAQINL</sequence>
<comment type="function">
    <text evidence="4 7">Motor protein required for establishing a bipolar spindle and thus contributing to chromosome congression during mitosis (PubMed:19001501, PubMed:37728657). Required in non-mitotic cells for transport of secretory proteins from the Golgi complex to the cell surface (PubMed:23857769).</text>
</comment>
<comment type="subunit">
    <text evidence="3 4 5 8">Interacts with the thyroid hormone receptor in the presence of thyroid hormone. Component of a large chromatin remodeling complex, at least composed of MYSM1, PCAF, RBM10 and KIF11/TRIP5. Interacts (via C-terminus) with the kinase NEK6 in both interphase and mitosis. Interacts with RARRES1 and AGBL2 (PubMed:21303978). Interacts with TPX2 (PubMed:37728657).</text>
</comment>
<comment type="subcellular location">
    <subcellularLocation>
        <location evidence="4 7">Cytoplasm</location>
    </subcellularLocation>
    <subcellularLocation>
        <location evidence="4 8">Cytoplasm</location>
        <location evidence="4 8">Cytoskeleton</location>
        <location evidence="4 8">Spindle pole</location>
    </subcellularLocation>
</comment>
<comment type="PTM">
    <text evidence="4 9">Phosphorylated exclusively on serine during S phase, but on both serine and Thr-926 during mitosis, so controlling the association of KIF11 with the spindle apparatus (probably during early prophase).</text>
</comment>
<comment type="PTM">
    <text evidence="4">A subset of this protein primarily localized at the spindle pole is phosphorylated by NEK6 during mitosis; phosphorylation is required for mitotic function.</text>
</comment>
<comment type="PTM">
    <text evidence="8">Ubiquitinated at Lys-1034 by UHRF1 via 'Lys-63'-linked ubiquitin chains, leading to interaction with spindle assembly factor TPX2, thereby ensuring accurate distribution to the spindles during metaphase.</text>
</comment>
<comment type="disease" evidence="6">
    <disease id="DI-03432">
        <name>Microcephaly with or without chorioretinopathy, lymphedema, or impaired intellectual development</name>
        <acronym>MCLMR</acronym>
        <description>An autosomal dominant disorder that involves an overlapping but variable spectrum of central nervous system and ocular developmental anomalies. Microcephaly ranges from mild to severe and is often associated with mild to moderate developmental delay and a characteristic facial phenotype with upslanting palpebral fissures, broad nose with rounded tip, long philtrum with thin upper lip, prominent chin, and prominent ears. Chorioretinopathy is the most common eye abnormality, but retinal folds, microphthalmia, and myopic and hypermetropic astigmatism have also been reported, and some individuals have no overt ocular phenotype. Congenital lymphedema, when present, is typically confined to the dorsa of the feet, and lymphoscintigraphy reveals the absence of radioactive isotope uptake from the webspaces between the toes.</description>
        <dbReference type="MIM" id="152950"/>
    </disease>
    <text>The disease is caused by variants affecting the gene represented in this entry.</text>
</comment>
<comment type="similarity">
    <text evidence="2">Belongs to the TRAFAC class myosin-kinesin ATPase superfamily. Kinesin family. BimC subfamily.</text>
</comment>
<accession>P52732</accession>
<accession>A0AV49</accession>
<accession>B2RMV3</accession>
<accession>Q15716</accession>
<accession>Q5VWX0</accession>